<organism>
    <name type="scientific">Rhizobium rhizogenes (strain K84 / ATCC BAA-868)</name>
    <name type="common">Agrobacterium radiobacter</name>
    <dbReference type="NCBI Taxonomy" id="311403"/>
    <lineage>
        <taxon>Bacteria</taxon>
        <taxon>Pseudomonadati</taxon>
        <taxon>Pseudomonadota</taxon>
        <taxon>Alphaproteobacteria</taxon>
        <taxon>Hyphomicrobiales</taxon>
        <taxon>Rhizobiaceae</taxon>
        <taxon>Rhizobium/Agrobacterium group</taxon>
        <taxon>Rhizobium</taxon>
    </lineage>
</organism>
<feature type="chain" id="PRO_1000198695" description="Tryptophan synthase alpha chain">
    <location>
        <begin position="1"/>
        <end position="279"/>
    </location>
</feature>
<feature type="active site" description="Proton acceptor" evidence="1">
    <location>
        <position position="50"/>
    </location>
</feature>
<feature type="active site" description="Proton acceptor" evidence="1">
    <location>
        <position position="61"/>
    </location>
</feature>
<keyword id="KW-0028">Amino-acid biosynthesis</keyword>
<keyword id="KW-0057">Aromatic amino acid biosynthesis</keyword>
<keyword id="KW-0456">Lyase</keyword>
<keyword id="KW-0822">Tryptophan biosynthesis</keyword>
<gene>
    <name evidence="1" type="primary">trpA</name>
    <name type="ordered locus">Arad_0028</name>
</gene>
<proteinExistence type="inferred from homology"/>
<accession>B9JG44</accession>
<comment type="function">
    <text evidence="1">The alpha subunit is responsible for the aldol cleavage of indoleglycerol phosphate to indole and glyceraldehyde 3-phosphate.</text>
</comment>
<comment type="catalytic activity">
    <reaction evidence="1">
        <text>(1S,2R)-1-C-(indol-3-yl)glycerol 3-phosphate + L-serine = D-glyceraldehyde 3-phosphate + L-tryptophan + H2O</text>
        <dbReference type="Rhea" id="RHEA:10532"/>
        <dbReference type="ChEBI" id="CHEBI:15377"/>
        <dbReference type="ChEBI" id="CHEBI:33384"/>
        <dbReference type="ChEBI" id="CHEBI:57912"/>
        <dbReference type="ChEBI" id="CHEBI:58866"/>
        <dbReference type="ChEBI" id="CHEBI:59776"/>
        <dbReference type="EC" id="4.2.1.20"/>
    </reaction>
</comment>
<comment type="pathway">
    <text evidence="1">Amino-acid biosynthesis; L-tryptophan biosynthesis; L-tryptophan from chorismate: step 5/5.</text>
</comment>
<comment type="subunit">
    <text evidence="1">Tetramer of two alpha and two beta chains.</text>
</comment>
<comment type="similarity">
    <text evidence="1">Belongs to the TrpA family.</text>
</comment>
<reference key="1">
    <citation type="journal article" date="2009" name="J. Bacteriol.">
        <title>Genome sequences of three Agrobacterium biovars help elucidate the evolution of multichromosome genomes in bacteria.</title>
        <authorList>
            <person name="Slater S.C."/>
            <person name="Goldman B.S."/>
            <person name="Goodner B."/>
            <person name="Setubal J.C."/>
            <person name="Farrand S.K."/>
            <person name="Nester E.W."/>
            <person name="Burr T.J."/>
            <person name="Banta L."/>
            <person name="Dickerman A.W."/>
            <person name="Paulsen I."/>
            <person name="Otten L."/>
            <person name="Suen G."/>
            <person name="Welch R."/>
            <person name="Almeida N.F."/>
            <person name="Arnold F."/>
            <person name="Burton O.T."/>
            <person name="Du Z."/>
            <person name="Ewing A."/>
            <person name="Godsy E."/>
            <person name="Heisel S."/>
            <person name="Houmiel K.L."/>
            <person name="Jhaveri J."/>
            <person name="Lu J."/>
            <person name="Miller N.M."/>
            <person name="Norton S."/>
            <person name="Chen Q."/>
            <person name="Phoolcharoen W."/>
            <person name="Ohlin V."/>
            <person name="Ondrusek D."/>
            <person name="Pride N."/>
            <person name="Stricklin S.L."/>
            <person name="Sun J."/>
            <person name="Wheeler C."/>
            <person name="Wilson L."/>
            <person name="Zhu H."/>
            <person name="Wood D.W."/>
        </authorList>
    </citation>
    <scope>NUCLEOTIDE SEQUENCE [LARGE SCALE GENOMIC DNA]</scope>
    <source>
        <strain>K84 / ATCC BAA-868</strain>
    </source>
</reference>
<evidence type="ECO:0000255" key="1">
    <source>
        <dbReference type="HAMAP-Rule" id="MF_00131"/>
    </source>
</evidence>
<name>TRPA_RHIR8</name>
<sequence>MTARMDKRFAALKAEGRPALVTYFMGGDPDYDTSLGIMKALPEAGADVIELGMPFSDPMADGPAIQLAGQRALKAGQTLKKTLQLAADFRKTDGDTPIVLMGYYNPIYIYGVETFLDDAIAAGIDGLIVVDLPPEMDDELCIPAIRKGINFIRLATPTTDEKRLPAVLKNTSGFVYYVSMNGITGSALPDPSLVSGAVKRIKQHTDLPVCVGFGVKTAEHAKLIGASADGVVVGTAIVNQIATSLTKDGKAGADTIQAVATLVRGLSTGTRSARLVAAE</sequence>
<protein>
    <recommendedName>
        <fullName evidence="1">Tryptophan synthase alpha chain</fullName>
        <ecNumber evidence="1">4.2.1.20</ecNumber>
    </recommendedName>
</protein>
<dbReference type="EC" id="4.2.1.20" evidence="1"/>
<dbReference type="EMBL" id="CP000628">
    <property type="protein sequence ID" value="ACM24827.1"/>
    <property type="molecule type" value="Genomic_DNA"/>
</dbReference>
<dbReference type="RefSeq" id="WP_007698614.1">
    <property type="nucleotide sequence ID" value="NC_011985.1"/>
</dbReference>
<dbReference type="SMR" id="B9JG44"/>
<dbReference type="STRING" id="311403.Arad_0028"/>
<dbReference type="GeneID" id="86850430"/>
<dbReference type="KEGG" id="ara:Arad_0028"/>
<dbReference type="eggNOG" id="COG0159">
    <property type="taxonomic scope" value="Bacteria"/>
</dbReference>
<dbReference type="HOGENOM" id="CLU_016734_0_0_5"/>
<dbReference type="UniPathway" id="UPA00035">
    <property type="reaction ID" value="UER00044"/>
</dbReference>
<dbReference type="Proteomes" id="UP000001600">
    <property type="component" value="Chromosome 1"/>
</dbReference>
<dbReference type="GO" id="GO:0005829">
    <property type="term" value="C:cytosol"/>
    <property type="evidence" value="ECO:0007669"/>
    <property type="project" value="TreeGrafter"/>
</dbReference>
<dbReference type="GO" id="GO:0004834">
    <property type="term" value="F:tryptophan synthase activity"/>
    <property type="evidence" value="ECO:0007669"/>
    <property type="project" value="UniProtKB-UniRule"/>
</dbReference>
<dbReference type="CDD" id="cd04724">
    <property type="entry name" value="Tryptophan_synthase_alpha"/>
    <property type="match status" value="1"/>
</dbReference>
<dbReference type="FunFam" id="3.20.20.70:FF:000037">
    <property type="entry name" value="Tryptophan synthase alpha chain"/>
    <property type="match status" value="1"/>
</dbReference>
<dbReference type="Gene3D" id="3.20.20.70">
    <property type="entry name" value="Aldolase class I"/>
    <property type="match status" value="1"/>
</dbReference>
<dbReference type="HAMAP" id="MF_00131">
    <property type="entry name" value="Trp_synth_alpha"/>
    <property type="match status" value="1"/>
</dbReference>
<dbReference type="InterPro" id="IPR013785">
    <property type="entry name" value="Aldolase_TIM"/>
</dbReference>
<dbReference type="InterPro" id="IPR011060">
    <property type="entry name" value="RibuloseP-bd_barrel"/>
</dbReference>
<dbReference type="InterPro" id="IPR018204">
    <property type="entry name" value="Trp_synthase_alpha_AS"/>
</dbReference>
<dbReference type="InterPro" id="IPR002028">
    <property type="entry name" value="Trp_synthase_suA"/>
</dbReference>
<dbReference type="NCBIfam" id="TIGR00262">
    <property type="entry name" value="trpA"/>
    <property type="match status" value="1"/>
</dbReference>
<dbReference type="PANTHER" id="PTHR43406:SF1">
    <property type="entry name" value="TRYPTOPHAN SYNTHASE ALPHA CHAIN, CHLOROPLASTIC"/>
    <property type="match status" value="1"/>
</dbReference>
<dbReference type="PANTHER" id="PTHR43406">
    <property type="entry name" value="TRYPTOPHAN SYNTHASE, ALPHA CHAIN"/>
    <property type="match status" value="1"/>
</dbReference>
<dbReference type="Pfam" id="PF00290">
    <property type="entry name" value="Trp_syntA"/>
    <property type="match status" value="1"/>
</dbReference>
<dbReference type="SUPFAM" id="SSF51366">
    <property type="entry name" value="Ribulose-phoshate binding barrel"/>
    <property type="match status" value="1"/>
</dbReference>
<dbReference type="PROSITE" id="PS00167">
    <property type="entry name" value="TRP_SYNTHASE_ALPHA"/>
    <property type="match status" value="1"/>
</dbReference>